<proteinExistence type="inferred from homology"/>
<accession>Q7VSW3</accession>
<dbReference type="EC" id="2.3.1.35" evidence="1"/>
<dbReference type="EC" id="2.3.1.1" evidence="1"/>
<dbReference type="EMBL" id="BX640422">
    <property type="protein sequence ID" value="CAE44062.1"/>
    <property type="molecule type" value="Genomic_DNA"/>
</dbReference>
<dbReference type="RefSeq" id="NP_882305.1">
    <property type="nucleotide sequence ID" value="NC_002929.2"/>
</dbReference>
<dbReference type="RefSeq" id="WP_010931662.1">
    <property type="nucleotide sequence ID" value="NZ_CP039022.1"/>
</dbReference>
<dbReference type="SMR" id="Q7VSW3"/>
<dbReference type="STRING" id="257313.BP3807"/>
<dbReference type="MEROPS" id="T05.001"/>
<dbReference type="PaxDb" id="257313-BP3807"/>
<dbReference type="GeneID" id="69599967"/>
<dbReference type="KEGG" id="bpe:BP3807"/>
<dbReference type="PATRIC" id="fig|257313.5.peg.4113"/>
<dbReference type="eggNOG" id="COG1364">
    <property type="taxonomic scope" value="Bacteria"/>
</dbReference>
<dbReference type="HOGENOM" id="CLU_027172_1_0_4"/>
<dbReference type="UniPathway" id="UPA00068">
    <property type="reaction ID" value="UER00106"/>
</dbReference>
<dbReference type="UniPathway" id="UPA00068">
    <property type="reaction ID" value="UER00111"/>
</dbReference>
<dbReference type="Proteomes" id="UP000002676">
    <property type="component" value="Chromosome"/>
</dbReference>
<dbReference type="GO" id="GO:0005737">
    <property type="term" value="C:cytoplasm"/>
    <property type="evidence" value="ECO:0007669"/>
    <property type="project" value="UniProtKB-SubCell"/>
</dbReference>
<dbReference type="GO" id="GO:0004358">
    <property type="term" value="F:glutamate N-acetyltransferase activity"/>
    <property type="evidence" value="ECO:0007669"/>
    <property type="project" value="UniProtKB-UniRule"/>
</dbReference>
<dbReference type="GO" id="GO:0004042">
    <property type="term" value="F:L-glutamate N-acetyltransferase activity"/>
    <property type="evidence" value="ECO:0007669"/>
    <property type="project" value="UniProtKB-UniRule"/>
</dbReference>
<dbReference type="GO" id="GO:0006526">
    <property type="term" value="P:L-arginine biosynthetic process"/>
    <property type="evidence" value="ECO:0007669"/>
    <property type="project" value="UniProtKB-UniRule"/>
</dbReference>
<dbReference type="GO" id="GO:0006592">
    <property type="term" value="P:ornithine biosynthetic process"/>
    <property type="evidence" value="ECO:0007669"/>
    <property type="project" value="TreeGrafter"/>
</dbReference>
<dbReference type="CDD" id="cd02152">
    <property type="entry name" value="OAT"/>
    <property type="match status" value="1"/>
</dbReference>
<dbReference type="FunFam" id="3.60.70.12:FF:000001">
    <property type="entry name" value="Arginine biosynthesis bifunctional protein ArgJ, chloroplastic"/>
    <property type="match status" value="1"/>
</dbReference>
<dbReference type="Gene3D" id="3.30.2330.10">
    <property type="entry name" value="arginine biosynthesis bifunctional protein suprefamily"/>
    <property type="match status" value="1"/>
</dbReference>
<dbReference type="Gene3D" id="3.10.20.340">
    <property type="entry name" value="ArgJ beta chain, C-terminal domain"/>
    <property type="match status" value="1"/>
</dbReference>
<dbReference type="Gene3D" id="3.60.70.12">
    <property type="entry name" value="L-amino peptidase D-ALA esterase/amidase"/>
    <property type="match status" value="1"/>
</dbReference>
<dbReference type="HAMAP" id="MF_01106">
    <property type="entry name" value="ArgJ"/>
    <property type="match status" value="1"/>
</dbReference>
<dbReference type="InterPro" id="IPR002813">
    <property type="entry name" value="Arg_biosynth_ArgJ"/>
</dbReference>
<dbReference type="InterPro" id="IPR016117">
    <property type="entry name" value="ArgJ-like_dom_sf"/>
</dbReference>
<dbReference type="InterPro" id="IPR042195">
    <property type="entry name" value="ArgJ_beta_C"/>
</dbReference>
<dbReference type="NCBIfam" id="TIGR00120">
    <property type="entry name" value="ArgJ"/>
    <property type="match status" value="1"/>
</dbReference>
<dbReference type="NCBIfam" id="NF003802">
    <property type="entry name" value="PRK05388.1"/>
    <property type="match status" value="1"/>
</dbReference>
<dbReference type="PANTHER" id="PTHR23100">
    <property type="entry name" value="ARGININE BIOSYNTHESIS BIFUNCTIONAL PROTEIN ARGJ"/>
    <property type="match status" value="1"/>
</dbReference>
<dbReference type="PANTHER" id="PTHR23100:SF0">
    <property type="entry name" value="ARGININE BIOSYNTHESIS BIFUNCTIONAL PROTEIN ARGJ, MITOCHONDRIAL"/>
    <property type="match status" value="1"/>
</dbReference>
<dbReference type="Pfam" id="PF01960">
    <property type="entry name" value="ArgJ"/>
    <property type="match status" value="1"/>
</dbReference>
<dbReference type="SUPFAM" id="SSF56266">
    <property type="entry name" value="DmpA/ArgJ-like"/>
    <property type="match status" value="1"/>
</dbReference>
<keyword id="KW-0012">Acyltransferase</keyword>
<keyword id="KW-0028">Amino-acid biosynthesis</keyword>
<keyword id="KW-0055">Arginine biosynthesis</keyword>
<keyword id="KW-0068">Autocatalytic cleavage</keyword>
<keyword id="KW-0963">Cytoplasm</keyword>
<keyword id="KW-0511">Multifunctional enzyme</keyword>
<keyword id="KW-1185">Reference proteome</keyword>
<keyword id="KW-0808">Transferase</keyword>
<sequence>MAVNLQIPSESEILPVAGVEIGVAEAGIRKAGRRDLTVFRLAPGSAVAGVFTRNRFRAAPVQVCEAHLAQGGPIRALVVNTGNANAGTGAPGLKNAQDTCAALGKLLDVPAEQILPFSTGVILEPLPMDRLTAGLPAAVADLRADGWYGAAHGIMTTDTLPKIHSRRVNIGGKTVTITGISKGAGMIRPNMATMLGFLATDAGIAQPLLRQLAIELADVSFNRITVDGDTSTNDSFILIATGQAGVTVDSAGDAAYAALRDALAAAATDLAQKIVRDAEGATKFMTIRVEEAGNTEEALKVAYAVAHSPLVKTAFFASDPNLGRILAAIGYAGIDDLDVSRLRLWLGDVLVAVDGGRNPDYQEADGQRVMKQAEILVRIALGRGQVADTVYTCDFSHEYVTINADYRS</sequence>
<protein>
    <recommendedName>
        <fullName evidence="1">Arginine biosynthesis bifunctional protein ArgJ</fullName>
    </recommendedName>
    <domain>
        <recommendedName>
            <fullName evidence="1">Glutamate N-acetyltransferase</fullName>
            <ecNumber evidence="1">2.3.1.35</ecNumber>
        </recommendedName>
        <alternativeName>
            <fullName evidence="1">Ornithine acetyltransferase</fullName>
            <shortName evidence="1">OATase</shortName>
        </alternativeName>
        <alternativeName>
            <fullName evidence="1">Ornithine transacetylase</fullName>
        </alternativeName>
    </domain>
    <domain>
        <recommendedName>
            <fullName evidence="1">Amino-acid acetyltransferase</fullName>
            <ecNumber evidence="1">2.3.1.1</ecNumber>
        </recommendedName>
        <alternativeName>
            <fullName evidence="1">N-acetylglutamate synthase</fullName>
            <shortName evidence="1">AGSase</shortName>
        </alternativeName>
    </domain>
    <component>
        <recommendedName>
            <fullName evidence="1">Arginine biosynthesis bifunctional protein ArgJ alpha chain</fullName>
        </recommendedName>
    </component>
    <component>
        <recommendedName>
            <fullName evidence="1">Arginine biosynthesis bifunctional protein ArgJ beta chain</fullName>
        </recommendedName>
    </component>
</protein>
<comment type="function">
    <text evidence="1">Catalyzes two activities which are involved in the cyclic version of arginine biosynthesis: the synthesis of N-acetylglutamate from glutamate and acetyl-CoA as the acetyl donor, and of ornithine by transacetylation between N(2)-acetylornithine and glutamate.</text>
</comment>
<comment type="catalytic activity">
    <reaction evidence="1">
        <text>N(2)-acetyl-L-ornithine + L-glutamate = N-acetyl-L-glutamate + L-ornithine</text>
        <dbReference type="Rhea" id="RHEA:15349"/>
        <dbReference type="ChEBI" id="CHEBI:29985"/>
        <dbReference type="ChEBI" id="CHEBI:44337"/>
        <dbReference type="ChEBI" id="CHEBI:46911"/>
        <dbReference type="ChEBI" id="CHEBI:57805"/>
        <dbReference type="EC" id="2.3.1.35"/>
    </reaction>
</comment>
<comment type="catalytic activity">
    <reaction evidence="1">
        <text>L-glutamate + acetyl-CoA = N-acetyl-L-glutamate + CoA + H(+)</text>
        <dbReference type="Rhea" id="RHEA:24292"/>
        <dbReference type="ChEBI" id="CHEBI:15378"/>
        <dbReference type="ChEBI" id="CHEBI:29985"/>
        <dbReference type="ChEBI" id="CHEBI:44337"/>
        <dbReference type="ChEBI" id="CHEBI:57287"/>
        <dbReference type="ChEBI" id="CHEBI:57288"/>
        <dbReference type="EC" id="2.3.1.1"/>
    </reaction>
</comment>
<comment type="pathway">
    <text evidence="1">Amino-acid biosynthesis; L-arginine biosynthesis; L-ornithine and N-acetyl-L-glutamate from L-glutamate and N(2)-acetyl-L-ornithine (cyclic): step 1/1.</text>
</comment>
<comment type="pathway">
    <text evidence="1">Amino-acid biosynthesis; L-arginine biosynthesis; N(2)-acetyl-L-ornithine from L-glutamate: step 1/4.</text>
</comment>
<comment type="subunit">
    <text evidence="1">Heterotetramer of two alpha and two beta chains.</text>
</comment>
<comment type="subcellular location">
    <subcellularLocation>
        <location evidence="1">Cytoplasm</location>
    </subcellularLocation>
</comment>
<comment type="similarity">
    <text evidence="1">Belongs to the ArgJ family.</text>
</comment>
<gene>
    <name evidence="1" type="primary">argJ</name>
    <name type="ordered locus">BP3807</name>
</gene>
<reference key="1">
    <citation type="journal article" date="2003" name="Nat. Genet.">
        <title>Comparative analysis of the genome sequences of Bordetella pertussis, Bordetella parapertussis and Bordetella bronchiseptica.</title>
        <authorList>
            <person name="Parkhill J."/>
            <person name="Sebaihia M."/>
            <person name="Preston A."/>
            <person name="Murphy L.D."/>
            <person name="Thomson N.R."/>
            <person name="Harris D.E."/>
            <person name="Holden M.T.G."/>
            <person name="Churcher C.M."/>
            <person name="Bentley S.D."/>
            <person name="Mungall K.L."/>
            <person name="Cerdeno-Tarraga A.-M."/>
            <person name="Temple L."/>
            <person name="James K.D."/>
            <person name="Harris B."/>
            <person name="Quail M.A."/>
            <person name="Achtman M."/>
            <person name="Atkin R."/>
            <person name="Baker S."/>
            <person name="Basham D."/>
            <person name="Bason N."/>
            <person name="Cherevach I."/>
            <person name="Chillingworth T."/>
            <person name="Collins M."/>
            <person name="Cronin A."/>
            <person name="Davis P."/>
            <person name="Doggett J."/>
            <person name="Feltwell T."/>
            <person name="Goble A."/>
            <person name="Hamlin N."/>
            <person name="Hauser H."/>
            <person name="Holroyd S."/>
            <person name="Jagels K."/>
            <person name="Leather S."/>
            <person name="Moule S."/>
            <person name="Norberczak H."/>
            <person name="O'Neil S."/>
            <person name="Ormond D."/>
            <person name="Price C."/>
            <person name="Rabbinowitsch E."/>
            <person name="Rutter S."/>
            <person name="Sanders M."/>
            <person name="Saunders D."/>
            <person name="Seeger K."/>
            <person name="Sharp S."/>
            <person name="Simmonds M."/>
            <person name="Skelton J."/>
            <person name="Squares R."/>
            <person name="Squares S."/>
            <person name="Stevens K."/>
            <person name="Unwin L."/>
            <person name="Whitehead S."/>
            <person name="Barrell B.G."/>
            <person name="Maskell D.J."/>
        </authorList>
    </citation>
    <scope>NUCLEOTIDE SEQUENCE [LARGE SCALE GENOMIC DNA]</scope>
    <source>
        <strain>Tohama I / ATCC BAA-589 / NCTC 13251</strain>
    </source>
</reference>
<name>ARGJ_BORPE</name>
<feature type="chain" id="PRO_0000002133" description="Arginine biosynthesis bifunctional protein ArgJ alpha chain" evidence="1">
    <location>
        <begin position="1"/>
        <end position="192"/>
    </location>
</feature>
<feature type="chain" id="PRO_0000002134" description="Arginine biosynthesis bifunctional protein ArgJ beta chain" evidence="1">
    <location>
        <begin position="193"/>
        <end position="408"/>
    </location>
</feature>
<feature type="active site" description="Nucleophile" evidence="1">
    <location>
        <position position="193"/>
    </location>
</feature>
<feature type="binding site" evidence="1">
    <location>
        <position position="156"/>
    </location>
    <ligand>
        <name>substrate</name>
    </ligand>
</feature>
<feature type="binding site" evidence="1">
    <location>
        <position position="182"/>
    </location>
    <ligand>
        <name>substrate</name>
    </ligand>
</feature>
<feature type="binding site" evidence="1">
    <location>
        <position position="193"/>
    </location>
    <ligand>
        <name>substrate</name>
    </ligand>
</feature>
<feature type="binding site" evidence="1">
    <location>
        <position position="279"/>
    </location>
    <ligand>
        <name>substrate</name>
    </ligand>
</feature>
<feature type="binding site" evidence="1">
    <location>
        <position position="403"/>
    </location>
    <ligand>
        <name>substrate</name>
    </ligand>
</feature>
<feature type="binding site" evidence="1">
    <location>
        <position position="408"/>
    </location>
    <ligand>
        <name>substrate</name>
    </ligand>
</feature>
<feature type="site" description="Involved in the stabilization of negative charge on the oxyanion by the formation of the oxyanion hole" evidence="1">
    <location>
        <position position="119"/>
    </location>
</feature>
<feature type="site" description="Involved in the stabilization of negative charge on the oxyanion by the formation of the oxyanion hole" evidence="1">
    <location>
        <position position="120"/>
    </location>
</feature>
<feature type="site" description="Cleavage; by autolysis" evidence="1">
    <location>
        <begin position="192"/>
        <end position="193"/>
    </location>
</feature>
<organism>
    <name type="scientific">Bordetella pertussis (strain Tohama I / ATCC BAA-589 / NCTC 13251)</name>
    <dbReference type="NCBI Taxonomy" id="257313"/>
    <lineage>
        <taxon>Bacteria</taxon>
        <taxon>Pseudomonadati</taxon>
        <taxon>Pseudomonadota</taxon>
        <taxon>Betaproteobacteria</taxon>
        <taxon>Burkholderiales</taxon>
        <taxon>Alcaligenaceae</taxon>
        <taxon>Bordetella</taxon>
    </lineage>
</organism>
<evidence type="ECO:0000255" key="1">
    <source>
        <dbReference type="HAMAP-Rule" id="MF_01106"/>
    </source>
</evidence>